<accession>P96454</accession>
<name>NHLF_RHORH</name>
<comment type="function">
    <text evidence="2 3">Mediates energy-dependent uptake of cobalt ions into the cell. Can also transport nickel ions, but cobalt is the preferred substrate.</text>
</comment>
<comment type="activity regulation">
    <text evidence="3">Cobalt uptake is inhibited by uncouplers (CCCP and 3,5-di-tert-butyl-4-hydroxybenzylidenemalononitrile) and by the addition of excess nickel.</text>
</comment>
<comment type="subcellular location">
    <subcellularLocation>
        <location evidence="4">Cell membrane</location>
        <topology evidence="4">Multi-pass membrane protein</topology>
    </subcellularLocation>
</comment>
<comment type="similarity">
    <text evidence="4">Belongs to the NiCoT transporter (TC 2.A.52) family.</text>
</comment>
<reference key="1">
    <citation type="journal article" date="1997" name="Proc. Natl. Acad. Sci. U.S.A.">
        <title>A novel transporter involved in cobalt uptake.</title>
        <authorList>
            <person name="Komeda H."/>
            <person name="Kobayashi M."/>
            <person name="Shimizu S."/>
        </authorList>
    </citation>
    <scope>NUCLEOTIDE SEQUENCE [GENOMIC DNA]</scope>
    <scope>FUNCTION</scope>
    <scope>ACTIVITY REGULATION</scope>
    <source>
        <strain>J1</strain>
    </source>
</reference>
<reference key="2">
    <citation type="journal article" date="1999" name="Arch. Microbiol.">
        <title>Selective transport of divalent cations by transition metal permeases: the Alcaligenes eutrophus HoxN and the Rhodococcus rhodochrous NhlF.</title>
        <authorList>
            <person name="Degen O."/>
            <person name="Kobayashi M."/>
            <person name="Shimizu S."/>
            <person name="Eitinger T."/>
        </authorList>
    </citation>
    <scope>FUNCTION AS A COBALT AND NICKEL IONS TRANSPORTER</scope>
</reference>
<organism>
    <name type="scientific">Rhodococcus rhodochrous</name>
    <dbReference type="NCBI Taxonomy" id="1829"/>
    <lineage>
        <taxon>Bacteria</taxon>
        <taxon>Bacillati</taxon>
        <taxon>Actinomycetota</taxon>
        <taxon>Actinomycetes</taxon>
        <taxon>Mycobacteriales</taxon>
        <taxon>Nocardiaceae</taxon>
        <taxon>Rhodococcus</taxon>
    </lineage>
</organism>
<keyword id="KW-1003">Cell membrane</keyword>
<keyword id="KW-0170">Cobalt</keyword>
<keyword id="KW-0171">Cobalt transport</keyword>
<keyword id="KW-0406">Ion transport</keyword>
<keyword id="KW-0472">Membrane</keyword>
<keyword id="KW-0533">Nickel</keyword>
<keyword id="KW-0921">Nickel transport</keyword>
<keyword id="KW-0812">Transmembrane</keyword>
<keyword id="KW-1133">Transmembrane helix</keyword>
<keyword id="KW-0813">Transport</keyword>
<proteinExistence type="evidence at protein level"/>
<evidence type="ECO:0000255" key="1"/>
<evidence type="ECO:0000269" key="2">
    <source>
    </source>
</evidence>
<evidence type="ECO:0000269" key="3">
    <source>
    </source>
</evidence>
<evidence type="ECO:0000305" key="4"/>
<feature type="chain" id="PRO_0000430351" description="Cobalt transport protein NhlF">
    <location>
        <begin position="1"/>
        <end position="352"/>
    </location>
</feature>
<feature type="transmembrane region" description="Helical" evidence="1">
    <location>
        <begin position="23"/>
        <end position="43"/>
    </location>
</feature>
<feature type="transmembrane region" description="Helical" evidence="1">
    <location>
        <begin position="46"/>
        <end position="66"/>
    </location>
</feature>
<feature type="transmembrane region" description="Helical" evidence="1">
    <location>
        <begin position="95"/>
        <end position="115"/>
    </location>
</feature>
<feature type="transmembrane region" description="Helical" evidence="1">
    <location>
        <begin position="131"/>
        <end position="151"/>
    </location>
</feature>
<feature type="transmembrane region" description="Helical" evidence="1">
    <location>
        <begin position="206"/>
        <end position="226"/>
    </location>
</feature>
<feature type="transmembrane region" description="Helical" evidence="1">
    <location>
        <begin position="230"/>
        <end position="250"/>
    </location>
</feature>
<feature type="transmembrane region" description="Helical" evidence="1">
    <location>
        <begin position="290"/>
        <end position="310"/>
    </location>
</feature>
<feature type="transmembrane region" description="Helical" evidence="1">
    <location>
        <begin position="323"/>
        <end position="343"/>
    </location>
</feature>
<sequence length="352" mass="37187">MTSTTITPHHIGGAWTRTERRRLASVVGAIVILHVLGVALYLGYSGNPAAAGGLAGSGVLAYVLGVRHAFDADHIAAIDDTTRLMLLRGRRPVGVGFFFAMGHSTVVVVLALVVALGASALTTTELEGVQEIGGLVATVVAVTFLSIVAGLNSVVLRNLLCLSRQVRAGSDITGDLESRLSERGLFTRLLGNRWRGLVRSSWHMYPVGLLMGLGLETASEVTLLTLTASAATGGTLSIAAVLSLPLLFAAGMSTFDTADSLFMTRAYSWSYQDPQRRLNFNIATTGATVVIGLFVAGIYVCALLAHLPMFAALSPIGDISENFEFLGYAVAAAFILTWTGALLFNHLKPQRN</sequence>
<gene>
    <name type="primary">nhlF</name>
</gene>
<protein>
    <recommendedName>
        <fullName>Cobalt transport protein NhlF</fullName>
    </recommendedName>
</protein>
<dbReference type="EMBL" id="D83695">
    <property type="protein sequence ID" value="BAA12063.1"/>
    <property type="molecule type" value="Genomic_DNA"/>
</dbReference>
<dbReference type="TCDB" id="2.A.52.1.2">
    <property type="family name" value="the ni(2+)-co(2+) transporter (nicot) family"/>
</dbReference>
<dbReference type="GO" id="GO:0005886">
    <property type="term" value="C:plasma membrane"/>
    <property type="evidence" value="ECO:0007669"/>
    <property type="project" value="UniProtKB-SubCell"/>
</dbReference>
<dbReference type="GO" id="GO:0015099">
    <property type="term" value="F:nickel cation transmembrane transporter activity"/>
    <property type="evidence" value="ECO:0007669"/>
    <property type="project" value="InterPro"/>
</dbReference>
<dbReference type="GO" id="GO:0006824">
    <property type="term" value="P:cobalt ion transport"/>
    <property type="evidence" value="ECO:0007669"/>
    <property type="project" value="UniProtKB-KW"/>
</dbReference>
<dbReference type="InterPro" id="IPR004688">
    <property type="entry name" value="Ni/Co_transpt"/>
</dbReference>
<dbReference type="InterPro" id="IPR011541">
    <property type="entry name" value="Ni/Co_transpt_high_affinity"/>
</dbReference>
<dbReference type="NCBIfam" id="TIGR00802">
    <property type="entry name" value="nico"/>
    <property type="match status" value="1"/>
</dbReference>
<dbReference type="PANTHER" id="PTHR31611">
    <property type="entry name" value="HIGH-AFFINITY NICKEL TRANSPORT PROTEIN NIC1"/>
    <property type="match status" value="1"/>
</dbReference>
<dbReference type="PANTHER" id="PTHR31611:SF0">
    <property type="entry name" value="HIGH-AFFINITY NICKEL TRANSPORT PROTEIN NIC1"/>
    <property type="match status" value="1"/>
</dbReference>
<dbReference type="Pfam" id="PF03824">
    <property type="entry name" value="NicO"/>
    <property type="match status" value="1"/>
</dbReference>